<name>PMP22_MOUSE</name>
<sequence length="161" mass="18023">MLLLLLGILFLHIAVLVLLFVSTIVSQWLVGNGHTTDLWQNCTTSALGAVQHCYSSSVSEWLQSVQATMILSVIFSVLALFLFFCQLFTLTKGGRFYITGFFQILAGLCVMSAAAIYTVRHSEWHVNTDYSYGFAYILAWVAFPLALLSGIIYVILRKREL</sequence>
<keyword id="KW-0131">Cell cycle</keyword>
<keyword id="KW-1003">Cell membrane</keyword>
<keyword id="KW-0225">Disease variant</keyword>
<keyword id="KW-0325">Glycoprotein</keyword>
<keyword id="KW-0338">Growth arrest</keyword>
<keyword id="KW-0472">Membrane</keyword>
<keyword id="KW-1185">Reference proteome</keyword>
<keyword id="KW-0812">Transmembrane</keyword>
<keyword id="KW-1133">Transmembrane helix</keyword>
<keyword id="KW-0832">Ubl conjugation</keyword>
<proteinExistence type="evidence at protein level"/>
<accession>P16646</accession>
<accession>Q91XF9</accession>
<comment type="function">
    <text>Might be involved in growth regulation, and in myelinization in the peripheral nervous system.</text>
</comment>
<comment type="subcellular location">
    <subcellularLocation>
        <location evidence="2">Cell membrane</location>
        <topology evidence="2">Multi-pass membrane protein</topology>
    </subcellularLocation>
</comment>
<comment type="tissue specificity">
    <text evidence="5 6">Schwann cells of the peripheral nervous system (PubMed:1552943). Expressed at growth arrest of mammalian fibroblasts (PubMed:1692961).</text>
</comment>
<comment type="developmental stage">
    <text evidence="7">Expressed from day 3 of gastrulation, expression levels are maintained until day 10.</text>
</comment>
<comment type="PTM">
    <text evidence="8">Ubiquitinated by the DCX(DCAF13) E3 ubiquitin ligase complex, leading to its degradation.</text>
</comment>
<comment type="disease">
    <text evidence="4 5">A defect in Pmp-22 is the cause of trembler (tr) phenotype. Trembler mice show a Schwann cells defect characterized by severe hypomyelination and continuing Schwann cells proliferation throughout life.</text>
</comment>
<comment type="similarity">
    <text evidence="9">Belongs to the PMP-22/EMP/MP20 family.</text>
</comment>
<feature type="chain" id="PRO_0000164651" description="Peripheral myelin protein 22">
    <location>
        <begin position="1"/>
        <end position="161"/>
    </location>
</feature>
<feature type="topological domain" description="Cytoplasmic" evidence="3">
    <location>
        <position position="1"/>
    </location>
</feature>
<feature type="transmembrane region" description="Helical" evidence="1">
    <location>
        <begin position="2"/>
        <end position="31"/>
    </location>
</feature>
<feature type="topological domain" description="Extracellular" evidence="3">
    <location>
        <begin position="32"/>
        <end position="64"/>
    </location>
</feature>
<feature type="transmembrane region" description="Helical" evidence="1">
    <location>
        <begin position="65"/>
        <end position="91"/>
    </location>
</feature>
<feature type="topological domain" description="Cytoplasmic" evidence="3">
    <location>
        <begin position="92"/>
        <end position="95"/>
    </location>
</feature>
<feature type="transmembrane region" description="Helical" evidence="1">
    <location>
        <begin position="96"/>
        <end position="119"/>
    </location>
</feature>
<feature type="topological domain" description="Extracellular" evidence="3">
    <location>
        <begin position="120"/>
        <end position="133"/>
    </location>
</feature>
<feature type="transmembrane region" description="Helical" evidence="1">
    <location>
        <begin position="134"/>
        <end position="156"/>
    </location>
</feature>
<feature type="topological domain" description="Cytoplasmic" evidence="3">
    <location>
        <begin position="157"/>
        <end position="160"/>
    </location>
</feature>
<feature type="glycosylation site" description="N-linked (GlcNAc...) asparagine" evidence="3">
    <location>
        <position position="41"/>
    </location>
</feature>
<feature type="sequence variant" description="In tr-J." evidence="4">
    <original>L</original>
    <variation>P</variation>
    <location>
        <position position="16"/>
    </location>
</feature>
<feature type="sequence variant" description="In tr." evidence="5">
    <original>G</original>
    <variation>D</variation>
    <location>
        <position position="150"/>
    </location>
</feature>
<feature type="sequence conflict" description="In Ref. 5; AAA37661." evidence="9" ref="5">
    <location>
        <position position="161"/>
    </location>
</feature>
<reference key="1">
    <citation type="journal article" date="1990" name="Mol. Cell. Biol.">
        <title>A growth arrest-specific (gas) gene codes for a membrane protein.</title>
        <authorList>
            <person name="Manfioletti G."/>
            <person name="Ruaro M.E."/>
            <person name="del Sal G."/>
            <person name="Philipson L."/>
            <person name="Schneider C."/>
        </authorList>
    </citation>
    <scope>NUCLEOTIDE SEQUENCE [MRNA]</scope>
    <scope>TISSUE SPECIFICITY</scope>
</reference>
<reference key="2">
    <citation type="submission" date="1991-08" db="EMBL/GenBank/DDBJ databases">
        <authorList>
            <person name="Manfioletti G."/>
        </authorList>
    </citation>
    <scope>SEQUENCE REVISION</scope>
</reference>
<reference key="3">
    <citation type="journal article" date="1992" name="Nature">
        <title>Trembler mouse carries a point mutation in a myelin gene.</title>
        <authorList>
            <person name="Suter U."/>
            <person name="Welcher A.A."/>
            <person name="Ozcelik T."/>
            <person name="Snipes G.J."/>
            <person name="Kosaras B."/>
            <person name="Francke U."/>
            <person name="Billings-Gagliardi S."/>
            <person name="Sidman R.L."/>
            <person name="Shooter E.M."/>
        </authorList>
    </citation>
    <scope>NUCLEOTIDE SEQUENCE [MRNA]</scope>
    <scope>TISSUE SPECIFICITY</scope>
    <scope>VARIANT TR ASP-150</scope>
    <scope>DISEASE</scope>
</reference>
<reference key="4">
    <citation type="submission" date="1994-10" db="EMBL/GenBank/DDBJ databases">
        <authorList>
            <person name="Rautenstrauss B."/>
        </authorList>
    </citation>
    <scope>NUCLEOTIDE SEQUENCE [MRNA]</scope>
    <source>
        <tissue>Brain</tissue>
    </source>
</reference>
<reference key="5">
    <citation type="journal article" date="2004" name="Genome Res.">
        <title>The status, quality, and expansion of the NIH full-length cDNA project: the Mammalian Gene Collection (MGC).</title>
        <authorList>
            <consortium name="The MGC Project Team"/>
        </authorList>
    </citation>
    <scope>NUCLEOTIDE SEQUENCE [LARGE SCALE MRNA]</scope>
    <source>
        <tissue>Colon</tissue>
    </source>
</reference>
<reference key="6">
    <citation type="journal article" date="2019" name="Biochem. Biophys. Res. Commun.">
        <title>Loss of Emp2 compromises cardiogenic differentiation in mouse embryonic stem cells.</title>
        <authorList>
            <person name="Liu Y."/>
            <person name="Dakou E."/>
            <person name="Meng Y."/>
            <person name="Leyns L."/>
        </authorList>
    </citation>
    <scope>DEVELOPMENTAL STAGE</scope>
</reference>
<reference key="7">
    <citation type="journal article" date="2022" name="Cancer Sci.">
        <title>DCAF13 promotes breast cancer cell proliferation by ubiquitin inhibiting PERP expression.</title>
        <authorList>
            <person name="Shan B.Q."/>
            <person name="Wang X.M."/>
            <person name="Zheng L."/>
            <person name="Han Y."/>
            <person name="Gao J."/>
            <person name="Lv M.D."/>
            <person name="Zhang Y."/>
            <person name="Liu Y.X."/>
            <person name="Zhang H."/>
            <person name="Chen H.S."/>
            <person name="Ao L."/>
            <person name="Zhang Y.L."/>
            <person name="Lu X."/>
            <person name="Wu Z.J."/>
            <person name="Xu Y."/>
            <person name="Che X."/>
            <person name="Heger M."/>
            <person name="Cheng S.Q."/>
            <person name="Pan W.W."/>
            <person name="Zhang X."/>
        </authorList>
    </citation>
    <scope>UBIQUITINATION</scope>
</reference>
<reference key="8">
    <citation type="journal article" date="1992" name="Proc. Natl. Acad. Sci. U.S.A.">
        <title>A leucine-to-proline mutation in the putative first transmembrane domain of the 22-kDa peripheral myelin protein in the trembler-J mouse.</title>
        <authorList>
            <person name="Suter U."/>
            <person name="Moskow J.J."/>
            <person name="Welcher A.A."/>
            <person name="Snipes G.J."/>
            <person name="Kosaras B."/>
            <person name="Sidman R.L."/>
            <person name="Shooter E.M."/>
        </authorList>
    </citation>
    <scope>VARIANT TR-J PRO-16</scope>
    <scope>DISEASE</scope>
</reference>
<dbReference type="EMBL" id="M32240">
    <property type="protein sequence ID" value="AAA37661.1"/>
    <property type="molecule type" value="mRNA"/>
</dbReference>
<dbReference type="EMBL" id="Z38110">
    <property type="protein sequence ID" value="CAA86226.1"/>
    <property type="molecule type" value="mRNA"/>
</dbReference>
<dbReference type="EMBL" id="BC010765">
    <property type="protein sequence ID" value="AAH10765.1"/>
    <property type="molecule type" value="mRNA"/>
</dbReference>
<dbReference type="PIR" id="A36324">
    <property type="entry name" value="A36324"/>
</dbReference>
<dbReference type="PIR" id="S21721">
    <property type="entry name" value="S21721"/>
</dbReference>
<dbReference type="RefSeq" id="NP_001289184.1">
    <property type="nucleotide sequence ID" value="NM_001302255.1"/>
</dbReference>
<dbReference type="RefSeq" id="NP_001289186.1">
    <property type="nucleotide sequence ID" value="NM_001302257.1"/>
</dbReference>
<dbReference type="RefSeq" id="NP_001289187.1">
    <property type="nucleotide sequence ID" value="NM_001302258.1"/>
</dbReference>
<dbReference type="RefSeq" id="NP_001289188.1">
    <property type="nucleotide sequence ID" value="NM_001302259.1"/>
</dbReference>
<dbReference type="RefSeq" id="NP_001289189.1">
    <property type="nucleotide sequence ID" value="NM_001302260.1"/>
</dbReference>
<dbReference type="RefSeq" id="NP_032911.1">
    <property type="nucleotide sequence ID" value="NM_008885.3"/>
</dbReference>
<dbReference type="SMR" id="P16646"/>
<dbReference type="FunCoup" id="P16646">
    <property type="interactions" value="107"/>
</dbReference>
<dbReference type="STRING" id="10090.ENSMUSP00000104342"/>
<dbReference type="GlyCosmos" id="P16646">
    <property type="glycosylation" value="1 site, No reported glycans"/>
</dbReference>
<dbReference type="GlyGen" id="P16646">
    <property type="glycosylation" value="1 site"/>
</dbReference>
<dbReference type="PhosphoSitePlus" id="P16646"/>
<dbReference type="SwissPalm" id="P16646"/>
<dbReference type="PaxDb" id="10090-ENSMUSP00000018361"/>
<dbReference type="DNASU" id="18858"/>
<dbReference type="GeneID" id="18858"/>
<dbReference type="KEGG" id="mmu:18858"/>
<dbReference type="UCSC" id="uc007jkm.2">
    <property type="organism name" value="mouse"/>
</dbReference>
<dbReference type="AGR" id="MGI:97631"/>
<dbReference type="CTD" id="5376"/>
<dbReference type="MGI" id="MGI:97631">
    <property type="gene designation" value="Pmp22"/>
</dbReference>
<dbReference type="eggNOG" id="ENOG502S0F5">
    <property type="taxonomic scope" value="Eukaryota"/>
</dbReference>
<dbReference type="InParanoid" id="P16646"/>
<dbReference type="OrthoDB" id="6084046at2759"/>
<dbReference type="PhylomeDB" id="P16646"/>
<dbReference type="BioGRID-ORCS" id="18858">
    <property type="hits" value="7 hits in 82 CRISPR screens"/>
</dbReference>
<dbReference type="PRO" id="PR:P16646"/>
<dbReference type="Proteomes" id="UP000000589">
    <property type="component" value="Unplaced"/>
</dbReference>
<dbReference type="RNAct" id="P16646">
    <property type="molecule type" value="protein"/>
</dbReference>
<dbReference type="GO" id="GO:0009986">
    <property type="term" value="C:cell surface"/>
    <property type="evidence" value="ECO:0000314"/>
    <property type="project" value="MGI"/>
</dbReference>
<dbReference type="GO" id="GO:0043218">
    <property type="term" value="C:compact myelin"/>
    <property type="evidence" value="ECO:0000314"/>
    <property type="project" value="MGI"/>
</dbReference>
<dbReference type="GO" id="GO:0008305">
    <property type="term" value="C:integrin complex"/>
    <property type="evidence" value="ECO:0000314"/>
    <property type="project" value="MGI"/>
</dbReference>
<dbReference type="GO" id="GO:0043256">
    <property type="term" value="C:laminin complex"/>
    <property type="evidence" value="ECO:0000314"/>
    <property type="project" value="MGI"/>
</dbReference>
<dbReference type="GO" id="GO:0016020">
    <property type="term" value="C:membrane"/>
    <property type="evidence" value="ECO:0000314"/>
    <property type="project" value="MGI"/>
</dbReference>
<dbReference type="GO" id="GO:0048471">
    <property type="term" value="C:perinuclear region of cytoplasm"/>
    <property type="evidence" value="ECO:0000314"/>
    <property type="project" value="MGI"/>
</dbReference>
<dbReference type="GO" id="GO:0003774">
    <property type="term" value="F:cytoskeletal motor activity"/>
    <property type="evidence" value="ECO:0000315"/>
    <property type="project" value="MGI"/>
</dbReference>
<dbReference type="GO" id="GO:0030291">
    <property type="term" value="F:protein serine/threonine kinase inhibitor activity"/>
    <property type="evidence" value="ECO:0000315"/>
    <property type="project" value="MGI"/>
</dbReference>
<dbReference type="GO" id="GO:0030036">
    <property type="term" value="P:actin cytoskeleton organization"/>
    <property type="evidence" value="ECO:0000315"/>
    <property type="project" value="MGI"/>
</dbReference>
<dbReference type="GO" id="GO:0008344">
    <property type="term" value="P:adult locomotory behavior"/>
    <property type="evidence" value="ECO:0000315"/>
    <property type="project" value="MGI"/>
</dbReference>
<dbReference type="GO" id="GO:0007628">
    <property type="term" value="P:adult walking behavior"/>
    <property type="evidence" value="ECO:0000315"/>
    <property type="project" value="MGI"/>
</dbReference>
<dbReference type="GO" id="GO:0070842">
    <property type="term" value="P:aggresome assembly"/>
    <property type="evidence" value="ECO:0000315"/>
    <property type="project" value="MGI"/>
</dbReference>
<dbReference type="GO" id="GO:0006914">
    <property type="term" value="P:autophagy"/>
    <property type="evidence" value="ECO:0000315"/>
    <property type="project" value="MGI"/>
</dbReference>
<dbReference type="GO" id="GO:0061564">
    <property type="term" value="P:axon development"/>
    <property type="evidence" value="ECO:0000315"/>
    <property type="project" value="MGI"/>
</dbReference>
<dbReference type="GO" id="GO:0071711">
    <property type="term" value="P:basement membrane organization"/>
    <property type="evidence" value="ECO:0000315"/>
    <property type="project" value="MGI"/>
</dbReference>
<dbReference type="GO" id="GO:0007155">
    <property type="term" value="P:cell adhesion"/>
    <property type="evidence" value="ECO:0000315"/>
    <property type="project" value="MGI"/>
</dbReference>
<dbReference type="GO" id="GO:0034605">
    <property type="term" value="P:cellular response to heat"/>
    <property type="evidence" value="ECO:0000315"/>
    <property type="project" value="MGI"/>
</dbReference>
<dbReference type="GO" id="GO:0034620">
    <property type="term" value="P:cellular response to unfolded protein"/>
    <property type="evidence" value="ECO:0000315"/>
    <property type="project" value="MGI"/>
</dbReference>
<dbReference type="GO" id="GO:0008203">
    <property type="term" value="P:cholesterol metabolic process"/>
    <property type="evidence" value="ECO:0000315"/>
    <property type="project" value="MGI"/>
</dbReference>
<dbReference type="GO" id="GO:0010761">
    <property type="term" value="P:fibroblast migration"/>
    <property type="evidence" value="ECO:0000315"/>
    <property type="project" value="MGI"/>
</dbReference>
<dbReference type="GO" id="GO:0042063">
    <property type="term" value="P:gliogenesis"/>
    <property type="evidence" value="ECO:0000315"/>
    <property type="project" value="MGI"/>
</dbReference>
<dbReference type="GO" id="GO:0006955">
    <property type="term" value="P:immune response"/>
    <property type="evidence" value="ECO:0000315"/>
    <property type="project" value="MGI"/>
</dbReference>
<dbReference type="GO" id="GO:0030032">
    <property type="term" value="P:lamellipodium assembly"/>
    <property type="evidence" value="ECO:0000315"/>
    <property type="project" value="MGI"/>
</dbReference>
<dbReference type="GO" id="GO:0006629">
    <property type="term" value="P:lipid metabolic process"/>
    <property type="evidence" value="ECO:0000315"/>
    <property type="project" value="MGI"/>
</dbReference>
<dbReference type="GO" id="GO:0007618">
    <property type="term" value="P:mating"/>
    <property type="evidence" value="ECO:0000315"/>
    <property type="project" value="MGI"/>
</dbReference>
<dbReference type="GO" id="GO:0031579">
    <property type="term" value="P:membrane raft organization"/>
    <property type="evidence" value="ECO:0000315"/>
    <property type="project" value="MGI"/>
</dbReference>
<dbReference type="GO" id="GO:0061744">
    <property type="term" value="P:motor behavior"/>
    <property type="evidence" value="ECO:0000315"/>
    <property type="project" value="MGI"/>
</dbReference>
<dbReference type="GO" id="GO:0035264">
    <property type="term" value="P:multicellular organism growth"/>
    <property type="evidence" value="ECO:0000315"/>
    <property type="project" value="MGI"/>
</dbReference>
<dbReference type="GO" id="GO:0055001">
    <property type="term" value="P:muscle cell development"/>
    <property type="evidence" value="ECO:0000315"/>
    <property type="project" value="MGI"/>
</dbReference>
<dbReference type="GO" id="GO:0032288">
    <property type="term" value="P:myelin assembly"/>
    <property type="evidence" value="ECO:0000315"/>
    <property type="project" value="MGI"/>
</dbReference>
<dbReference type="GO" id="GO:0042552">
    <property type="term" value="P:myelination"/>
    <property type="evidence" value="ECO:0000315"/>
    <property type="project" value="MGI"/>
</dbReference>
<dbReference type="GO" id="GO:0022011">
    <property type="term" value="P:myelination in peripheral nervous system"/>
    <property type="evidence" value="ECO:0000315"/>
    <property type="project" value="MGI"/>
</dbReference>
<dbReference type="GO" id="GO:0010629">
    <property type="term" value="P:negative regulation of gene expression"/>
    <property type="evidence" value="ECO:0000315"/>
    <property type="project" value="MGI"/>
</dbReference>
<dbReference type="GO" id="GO:0098529">
    <property type="term" value="P:neuromuscular junction development, skeletal muscle fiber"/>
    <property type="evidence" value="ECO:0000315"/>
    <property type="project" value="MGI"/>
</dbReference>
<dbReference type="GO" id="GO:0050905">
    <property type="term" value="P:neuromuscular process"/>
    <property type="evidence" value="ECO:0000315"/>
    <property type="project" value="MGI"/>
</dbReference>
<dbReference type="GO" id="GO:0019228">
    <property type="term" value="P:neuronal action potential"/>
    <property type="evidence" value="ECO:0000315"/>
    <property type="project" value="MGI"/>
</dbReference>
<dbReference type="GO" id="GO:0019227">
    <property type="term" value="P:neuronal action potential propagation"/>
    <property type="evidence" value="ECO:0000315"/>
    <property type="project" value="MGI"/>
</dbReference>
<dbReference type="GO" id="GO:0045161">
    <property type="term" value="P:neuronal ion channel clustering"/>
    <property type="evidence" value="ECO:0000315"/>
    <property type="project" value="MGI"/>
</dbReference>
<dbReference type="GO" id="GO:0030913">
    <property type="term" value="P:paranodal junction assembly"/>
    <property type="evidence" value="ECO:0000315"/>
    <property type="project" value="MGI"/>
</dbReference>
<dbReference type="GO" id="GO:0007422">
    <property type="term" value="P:peripheral nervous system development"/>
    <property type="evidence" value="ECO:0000315"/>
    <property type="project" value="MGI"/>
</dbReference>
<dbReference type="GO" id="GO:0048936">
    <property type="term" value="P:peripheral nervous system neuron axonogenesis"/>
    <property type="evidence" value="ECO:0000315"/>
    <property type="project" value="MGI"/>
</dbReference>
<dbReference type="GO" id="GO:0010628">
    <property type="term" value="P:positive regulation of gene expression"/>
    <property type="evidence" value="ECO:0000315"/>
    <property type="project" value="MGI"/>
</dbReference>
<dbReference type="GO" id="GO:0010498">
    <property type="term" value="P:proteasomal protein catabolic process"/>
    <property type="evidence" value="ECO:0000315"/>
    <property type="project" value="MGI"/>
</dbReference>
<dbReference type="GO" id="GO:0043161">
    <property type="term" value="P:proteasome-mediated ubiquitin-dependent protein catabolic process"/>
    <property type="evidence" value="ECO:0000315"/>
    <property type="project" value="MGI"/>
</dbReference>
<dbReference type="GO" id="GO:2001233">
    <property type="term" value="P:regulation of apoptotic signaling pathway"/>
    <property type="evidence" value="ECO:0000315"/>
    <property type="project" value="MGI"/>
</dbReference>
<dbReference type="GO" id="GO:0051726">
    <property type="term" value="P:regulation of cell cycle"/>
    <property type="evidence" value="ECO:0007669"/>
    <property type="project" value="UniProtKB-KW"/>
</dbReference>
<dbReference type="GO" id="GO:0010468">
    <property type="term" value="P:regulation of gene expression"/>
    <property type="evidence" value="ECO:0000315"/>
    <property type="project" value="MGI"/>
</dbReference>
<dbReference type="GO" id="GO:0034350">
    <property type="term" value="P:regulation of glial cell apoptotic process"/>
    <property type="evidence" value="ECO:0000315"/>
    <property type="project" value="MGI"/>
</dbReference>
<dbReference type="GO" id="GO:0050727">
    <property type="term" value="P:regulation of inflammatory response"/>
    <property type="evidence" value="ECO:0000315"/>
    <property type="project" value="MGI"/>
</dbReference>
<dbReference type="GO" id="GO:0010624">
    <property type="term" value="P:regulation of Schwann cell proliferation"/>
    <property type="evidence" value="ECO:0000315"/>
    <property type="project" value="MGI"/>
</dbReference>
<dbReference type="GO" id="GO:0009617">
    <property type="term" value="P:response to bacterium"/>
    <property type="evidence" value="ECO:0000270"/>
    <property type="project" value="MGI"/>
</dbReference>
<dbReference type="GO" id="GO:0034976">
    <property type="term" value="P:response to endoplasmic reticulum stress"/>
    <property type="evidence" value="ECO:0000315"/>
    <property type="project" value="MGI"/>
</dbReference>
<dbReference type="GO" id="GO:0014044">
    <property type="term" value="P:Schwann cell development"/>
    <property type="evidence" value="ECO:0000315"/>
    <property type="project" value="MGI"/>
</dbReference>
<dbReference type="GO" id="GO:0014037">
    <property type="term" value="P:Schwann cell differentiation"/>
    <property type="evidence" value="ECO:0000315"/>
    <property type="project" value="MGI"/>
</dbReference>
<dbReference type="GO" id="GO:0036135">
    <property type="term" value="P:Schwann cell migration"/>
    <property type="evidence" value="ECO:0000315"/>
    <property type="project" value="MGI"/>
</dbReference>
<dbReference type="GO" id="GO:0051146">
    <property type="term" value="P:striated muscle cell differentiation"/>
    <property type="evidence" value="ECO:0000315"/>
    <property type="project" value="MGI"/>
</dbReference>
<dbReference type="GO" id="GO:0019226">
    <property type="term" value="P:transmission of nerve impulse"/>
    <property type="evidence" value="ECO:0000315"/>
    <property type="project" value="MGI"/>
</dbReference>
<dbReference type="GO" id="GO:0060005">
    <property type="term" value="P:vestibular reflex"/>
    <property type="evidence" value="ECO:0000315"/>
    <property type="project" value="MGI"/>
</dbReference>
<dbReference type="FunFam" id="1.20.140.150:FF:000019">
    <property type="entry name" value="Peripheral myelin protein 22"/>
    <property type="match status" value="1"/>
</dbReference>
<dbReference type="Gene3D" id="1.20.140.150">
    <property type="match status" value="1"/>
</dbReference>
<dbReference type="InterPro" id="IPR050579">
    <property type="entry name" value="PMP-22/EMP/MP20-like"/>
</dbReference>
<dbReference type="InterPro" id="IPR003936">
    <property type="entry name" value="PMP22"/>
</dbReference>
<dbReference type="InterPro" id="IPR004031">
    <property type="entry name" value="PMP22/EMP/MP20/Claudin"/>
</dbReference>
<dbReference type="InterPro" id="IPR004032">
    <property type="entry name" value="PMP22_EMP_MP20"/>
</dbReference>
<dbReference type="PANTHER" id="PTHR10671">
    <property type="entry name" value="EPITHELIAL MEMBRANE PROTEIN-RELATED"/>
    <property type="match status" value="1"/>
</dbReference>
<dbReference type="PANTHER" id="PTHR10671:SF7">
    <property type="entry name" value="PERIPHERAL MYELIN PROTEIN 22"/>
    <property type="match status" value="1"/>
</dbReference>
<dbReference type="Pfam" id="PF00822">
    <property type="entry name" value="PMP22_Claudin"/>
    <property type="match status" value="1"/>
</dbReference>
<dbReference type="PRINTS" id="PR01453">
    <property type="entry name" value="EPMEMFAMILY"/>
</dbReference>
<dbReference type="PRINTS" id="PR01458">
    <property type="entry name" value="PMYELIN22"/>
</dbReference>
<dbReference type="PROSITE" id="PS01221">
    <property type="entry name" value="PMP22_1"/>
    <property type="match status" value="1"/>
</dbReference>
<dbReference type="PROSITE" id="PS01222">
    <property type="entry name" value="PMP22_2"/>
    <property type="match status" value="1"/>
</dbReference>
<evidence type="ECO:0000250" key="1"/>
<evidence type="ECO:0000250" key="2">
    <source>
        <dbReference type="UniProtKB" id="Q01453"/>
    </source>
</evidence>
<evidence type="ECO:0000255" key="3"/>
<evidence type="ECO:0000269" key="4">
    <source>
    </source>
</evidence>
<evidence type="ECO:0000269" key="5">
    <source>
    </source>
</evidence>
<evidence type="ECO:0000269" key="6">
    <source>
    </source>
</evidence>
<evidence type="ECO:0000269" key="7">
    <source>
    </source>
</evidence>
<evidence type="ECO:0000269" key="8">
    <source>
    </source>
</evidence>
<evidence type="ECO:0000305" key="9"/>
<protein>
    <recommendedName>
        <fullName>Peripheral myelin protein 22</fullName>
        <shortName>PMP-22</shortName>
    </recommendedName>
    <alternativeName>
        <fullName>Growth arrest-specific protein 3</fullName>
        <shortName>GAS-3</shortName>
    </alternativeName>
</protein>
<organism>
    <name type="scientific">Mus musculus</name>
    <name type="common">Mouse</name>
    <dbReference type="NCBI Taxonomy" id="10090"/>
    <lineage>
        <taxon>Eukaryota</taxon>
        <taxon>Metazoa</taxon>
        <taxon>Chordata</taxon>
        <taxon>Craniata</taxon>
        <taxon>Vertebrata</taxon>
        <taxon>Euteleostomi</taxon>
        <taxon>Mammalia</taxon>
        <taxon>Eutheria</taxon>
        <taxon>Euarchontoglires</taxon>
        <taxon>Glires</taxon>
        <taxon>Rodentia</taxon>
        <taxon>Myomorpha</taxon>
        <taxon>Muroidea</taxon>
        <taxon>Muridae</taxon>
        <taxon>Murinae</taxon>
        <taxon>Mus</taxon>
        <taxon>Mus</taxon>
    </lineage>
</organism>
<gene>
    <name type="primary">Pmp22</name>
    <name type="synonym">Gas-3</name>
    <name type="synonym">Gas3</name>
    <name type="synonym">Pmp-22</name>
</gene>